<gene>
    <name type="primary">JIP5</name>
    <name type="ORF">PICST_54913</name>
</gene>
<name>JIP5_PICST</name>
<accession>A3LPR4</accession>
<protein>
    <recommendedName>
        <fullName>WD repeat-containing protein JIP5</fullName>
    </recommendedName>
</protein>
<sequence>MKKRKSNAVNAAQVLESSVSPILEINYSDPLFTLAAHPTEPVLISGLVTGHVFCHRYDAEALEEKQSARREQLLLQEKEAFKKGKVSQISKSVSQSKNPWWTIIKDHTEVPQESGVVASWKTKRHKGSCRHAIFEPLESSVGENIFTVGTDHIIKKASSETGKVVGKVDVSLDFPNSNDSITKLCHSATNSCLLAGTENGHVLVYDSKNLGGSKLKYKVSSAHDDAVNHILAMPAVSAYHYLTLGSTTLSHIDIRKGIITQSDNQDDELLSMCFATDQINDGKNDTVLVGHGEGIVTIWKNSKNRFMDQLTRIKVNKEASIDAIIPTMNCDDDEMAASVWCGDSEGLLHRVNYKKGKVVETRVHSSSRGKYGAADEVGLLEIDYDYRLISAGMESLKIWSNEQNEEIALDESDDSDDESDSDNSEDDLSSGSLSDTASDEEIEENKEEEDEKEDKPVKIDHPLANRSKKGLVGVSKHVTKKKQIDINKLTKKGKEEEEEEQPQKKKPKKDQLSTKQLRNMQKHEHGIRRFDDL</sequence>
<evidence type="ECO:0000250" key="1"/>
<evidence type="ECO:0000256" key="2">
    <source>
        <dbReference type="SAM" id="MobiDB-lite"/>
    </source>
</evidence>
<evidence type="ECO:0000305" key="3"/>
<comment type="subcellular location">
    <subcellularLocation>
        <location evidence="1">Nucleus</location>
        <location evidence="1">Nucleolus</location>
    </subcellularLocation>
</comment>
<comment type="similarity">
    <text evidence="3">Belongs to the WD repeat WDR55 family.</text>
</comment>
<organism>
    <name type="scientific">Scheffersomyces stipitis (strain ATCC 58785 / CBS 6054 / NBRC 10063 / NRRL Y-11545)</name>
    <name type="common">Yeast</name>
    <name type="synonym">Pichia stipitis</name>
    <dbReference type="NCBI Taxonomy" id="322104"/>
    <lineage>
        <taxon>Eukaryota</taxon>
        <taxon>Fungi</taxon>
        <taxon>Dikarya</taxon>
        <taxon>Ascomycota</taxon>
        <taxon>Saccharomycotina</taxon>
        <taxon>Pichiomycetes</taxon>
        <taxon>Debaryomycetaceae</taxon>
        <taxon>Scheffersomyces</taxon>
    </lineage>
</organism>
<proteinExistence type="inferred from homology"/>
<keyword id="KW-0539">Nucleus</keyword>
<keyword id="KW-1185">Reference proteome</keyword>
<keyword id="KW-0677">Repeat</keyword>
<keyword id="KW-0853">WD repeat</keyword>
<dbReference type="EMBL" id="CP000496">
    <property type="protein sequence ID" value="ABN65087.2"/>
    <property type="molecule type" value="Genomic_DNA"/>
</dbReference>
<dbReference type="RefSeq" id="XP_001383116.2">
    <property type="nucleotide sequence ID" value="XM_001383079.1"/>
</dbReference>
<dbReference type="SMR" id="A3LPR4"/>
<dbReference type="FunCoup" id="A3LPR4">
    <property type="interactions" value="118"/>
</dbReference>
<dbReference type="STRING" id="322104.A3LPR4"/>
<dbReference type="GeneID" id="4836748"/>
<dbReference type="KEGG" id="pic:PICST_54913"/>
<dbReference type="eggNOG" id="KOG2444">
    <property type="taxonomic scope" value="Eukaryota"/>
</dbReference>
<dbReference type="HOGENOM" id="CLU_035623_0_0_1"/>
<dbReference type="InParanoid" id="A3LPR4"/>
<dbReference type="OMA" id="DDNCIWC"/>
<dbReference type="OrthoDB" id="2288928at2759"/>
<dbReference type="Proteomes" id="UP000002258">
    <property type="component" value="Chromosome 2"/>
</dbReference>
<dbReference type="GO" id="GO:0005730">
    <property type="term" value="C:nucleolus"/>
    <property type="evidence" value="ECO:0007669"/>
    <property type="project" value="UniProtKB-SubCell"/>
</dbReference>
<dbReference type="GO" id="GO:0045943">
    <property type="term" value="P:positive regulation of transcription by RNA polymerase I"/>
    <property type="evidence" value="ECO:0007669"/>
    <property type="project" value="TreeGrafter"/>
</dbReference>
<dbReference type="GO" id="GO:0042273">
    <property type="term" value="P:ribosomal large subunit biogenesis"/>
    <property type="evidence" value="ECO:0007669"/>
    <property type="project" value="EnsemblFungi"/>
</dbReference>
<dbReference type="GO" id="GO:0006364">
    <property type="term" value="P:rRNA processing"/>
    <property type="evidence" value="ECO:0007669"/>
    <property type="project" value="TreeGrafter"/>
</dbReference>
<dbReference type="Gene3D" id="2.130.10.10">
    <property type="entry name" value="YVTN repeat-like/Quinoprotein amine dehydrogenase"/>
    <property type="match status" value="1"/>
</dbReference>
<dbReference type="InterPro" id="IPR015943">
    <property type="entry name" value="WD40/YVTN_repeat-like_dom_sf"/>
</dbReference>
<dbReference type="InterPro" id="IPR036322">
    <property type="entry name" value="WD40_repeat_dom_sf"/>
</dbReference>
<dbReference type="PANTHER" id="PTHR19924">
    <property type="entry name" value="UTP15 U3 SMALL NUCLEOLAR RNA-ASSOCIATED PROTEIN 15 FAMILY MEMBER"/>
    <property type="match status" value="1"/>
</dbReference>
<dbReference type="PANTHER" id="PTHR19924:SF31">
    <property type="entry name" value="WD REPEAT-CONTAINING PROTEIN JIP5"/>
    <property type="match status" value="1"/>
</dbReference>
<dbReference type="SUPFAM" id="SSF50978">
    <property type="entry name" value="WD40 repeat-like"/>
    <property type="match status" value="1"/>
</dbReference>
<reference key="1">
    <citation type="journal article" date="2007" name="Nat. Biotechnol.">
        <title>Genome sequence of the lignocellulose-bioconverting and xylose-fermenting yeast Pichia stipitis.</title>
        <authorList>
            <person name="Jeffries T.W."/>
            <person name="Grigoriev I.V."/>
            <person name="Grimwood J."/>
            <person name="Laplaza J.M."/>
            <person name="Aerts A."/>
            <person name="Salamov A."/>
            <person name="Schmutz J."/>
            <person name="Lindquist E."/>
            <person name="Dehal P."/>
            <person name="Shapiro H."/>
            <person name="Jin Y.-S."/>
            <person name="Passoth V."/>
            <person name="Richardson P.M."/>
        </authorList>
    </citation>
    <scope>NUCLEOTIDE SEQUENCE [LARGE SCALE GENOMIC DNA]</scope>
    <source>
        <strain>ATCC 58785 / CBS 6054 / NBRC 10063 / NRRL Y-11545</strain>
    </source>
</reference>
<feature type="chain" id="PRO_0000333569" description="WD repeat-containing protein JIP5">
    <location>
        <begin position="1"/>
        <end position="533"/>
    </location>
</feature>
<feature type="repeat" description="WD 1">
    <location>
        <begin position="26"/>
        <end position="67"/>
    </location>
</feature>
<feature type="repeat" description="WD 2">
    <location>
        <begin position="84"/>
        <end position="130"/>
    </location>
</feature>
<feature type="repeat" description="WD 3">
    <location>
        <begin position="176"/>
        <end position="215"/>
    </location>
</feature>
<feature type="repeat" description="WD 4">
    <location>
        <begin position="264"/>
        <end position="309"/>
    </location>
</feature>
<feature type="repeat" description="WD 5">
    <location>
        <begin position="372"/>
        <end position="409"/>
    </location>
</feature>
<feature type="region of interest" description="Disordered" evidence="2">
    <location>
        <begin position="408"/>
        <end position="533"/>
    </location>
</feature>
<feature type="compositionally biased region" description="Acidic residues" evidence="2">
    <location>
        <begin position="408"/>
        <end position="428"/>
    </location>
</feature>
<feature type="compositionally biased region" description="Acidic residues" evidence="2">
    <location>
        <begin position="437"/>
        <end position="452"/>
    </location>
</feature>
<feature type="compositionally biased region" description="Basic and acidic residues" evidence="2">
    <location>
        <begin position="453"/>
        <end position="463"/>
    </location>
</feature>
<feature type="compositionally biased region" description="Basic and acidic residues" evidence="2">
    <location>
        <begin position="521"/>
        <end position="533"/>
    </location>
</feature>